<comment type="function">
    <text evidence="1">The RuvA-RuvB-RuvC complex processes Holliday junction (HJ) DNA during genetic recombination and DNA repair, while the RuvA-RuvB complex plays an important role in the rescue of blocked DNA replication forks via replication fork reversal (RFR). RuvA specifically binds to HJ cruciform DNA, conferring on it an open structure. The RuvB hexamer acts as an ATP-dependent pump, pulling dsDNA into and through the RuvAB complex. RuvB forms 2 homohexamers on either side of HJ DNA bound by 1 or 2 RuvA tetramers; 4 subunits per hexamer contact DNA at a time. Coordinated motions by a converter formed by DNA-disengaged RuvB subunits stimulates ATP hydrolysis and nucleotide exchange. Immobilization of the converter enables RuvB to convert the ATP-contained energy into a lever motion, pulling 2 nucleotides of DNA out of the RuvA tetramer per ATP hydrolyzed, thus driving DNA branch migration. The RuvB motors rotate together with the DNA substrate, which together with the progressing nucleotide cycle form the mechanistic basis for DNA recombination by continuous HJ branch migration. Branch migration allows RuvC to scan DNA until it finds its consensus sequence, where it cleaves and resolves cruciform DNA.</text>
</comment>
<comment type="catalytic activity">
    <reaction evidence="1">
        <text>ATP + H2O = ADP + phosphate + H(+)</text>
        <dbReference type="Rhea" id="RHEA:13065"/>
        <dbReference type="ChEBI" id="CHEBI:15377"/>
        <dbReference type="ChEBI" id="CHEBI:15378"/>
        <dbReference type="ChEBI" id="CHEBI:30616"/>
        <dbReference type="ChEBI" id="CHEBI:43474"/>
        <dbReference type="ChEBI" id="CHEBI:456216"/>
    </reaction>
</comment>
<comment type="subunit">
    <text evidence="1">Homohexamer. Forms an RuvA(8)-RuvB(12)-Holliday junction (HJ) complex. HJ DNA is sandwiched between 2 RuvA tetramers; dsDNA enters through RuvA and exits via RuvB. An RuvB hexamer assembles on each DNA strand where it exits the tetramer. Each RuvB hexamer is contacted by two RuvA subunits (via domain III) on 2 adjacent RuvB subunits; this complex drives branch migration. In the full resolvosome a probable DNA-RuvA(4)-RuvB(12)-RuvC(2) complex forms which resolves the HJ.</text>
</comment>
<comment type="subcellular location">
    <subcellularLocation>
        <location evidence="1">Cytoplasm</location>
    </subcellularLocation>
</comment>
<comment type="domain">
    <text evidence="1">Has 3 domains, the large (RuvB-L) and small ATPase (RuvB-S) domains and the C-terminal head (RuvB-H) domain. The head domain binds DNA, while the ATPase domains jointly bind ATP, ADP or are empty depending on the state of the subunit in the translocation cycle. During a single DNA translocation step the structure of each domain remains the same, but their relative positions change.</text>
</comment>
<comment type="similarity">
    <text evidence="1">Belongs to the RuvB family.</text>
</comment>
<reference key="1">
    <citation type="journal article" date="2008" name="J. Bacteriol.">
        <title>The pangenome structure of Escherichia coli: comparative genomic analysis of E. coli commensal and pathogenic isolates.</title>
        <authorList>
            <person name="Rasko D.A."/>
            <person name="Rosovitz M.J."/>
            <person name="Myers G.S.A."/>
            <person name="Mongodin E.F."/>
            <person name="Fricke W.F."/>
            <person name="Gajer P."/>
            <person name="Crabtree J."/>
            <person name="Sebaihia M."/>
            <person name="Thomson N.R."/>
            <person name="Chaudhuri R."/>
            <person name="Henderson I.R."/>
            <person name="Sperandio V."/>
            <person name="Ravel J."/>
        </authorList>
    </citation>
    <scope>NUCLEOTIDE SEQUENCE [LARGE SCALE GENOMIC DNA]</scope>
    <source>
        <strain>E24377A / ETEC</strain>
    </source>
</reference>
<sequence length="336" mass="37174">MIEADRLISAGTTLPEDVADRAIRPKLLEEYVGQPQVRSQMEIFIKAAKLRGDALDHLLIFGPPGLGKTTLANIVANEMGVNLRTTSGPVLEKAGDLAAMLTNLEPHDVLFIDEIHRLSPVVEEVLYPAMEDYQLDIMIGEGPAARSIKIDLPPFTLIGATTRAGSLTSPLRDRFGIVQRLEFYQVPDLQYIVSRSARFMGLEMSDDGALEVARRARGTPRIANRLLRRVRDFAEVKHDGTISADIAAQALDMLNVDAEGFDYMDRKLLLAVIDKFFGGPVGLDNLAAAIGEERETIEDVLEPYLIQQGFLQRTPRGRMATTRAWNHFGITPPEMP</sequence>
<evidence type="ECO:0000255" key="1">
    <source>
        <dbReference type="HAMAP-Rule" id="MF_00016"/>
    </source>
</evidence>
<dbReference type="EC" id="3.6.4.-" evidence="1"/>
<dbReference type="EMBL" id="CP000800">
    <property type="protein sequence ID" value="ABV16622.1"/>
    <property type="molecule type" value="Genomic_DNA"/>
</dbReference>
<dbReference type="RefSeq" id="WP_000568519.1">
    <property type="nucleotide sequence ID" value="NC_009801.1"/>
</dbReference>
<dbReference type="SMR" id="A7ZMY4"/>
<dbReference type="GeneID" id="75202735"/>
<dbReference type="KEGG" id="ecw:EcE24377A_2090"/>
<dbReference type="HOGENOM" id="CLU_055599_1_0_6"/>
<dbReference type="Proteomes" id="UP000001122">
    <property type="component" value="Chromosome"/>
</dbReference>
<dbReference type="GO" id="GO:0005737">
    <property type="term" value="C:cytoplasm"/>
    <property type="evidence" value="ECO:0007669"/>
    <property type="project" value="UniProtKB-SubCell"/>
</dbReference>
<dbReference type="GO" id="GO:0048476">
    <property type="term" value="C:Holliday junction resolvase complex"/>
    <property type="evidence" value="ECO:0007669"/>
    <property type="project" value="UniProtKB-UniRule"/>
</dbReference>
<dbReference type="GO" id="GO:0005524">
    <property type="term" value="F:ATP binding"/>
    <property type="evidence" value="ECO:0007669"/>
    <property type="project" value="UniProtKB-UniRule"/>
</dbReference>
<dbReference type="GO" id="GO:0016887">
    <property type="term" value="F:ATP hydrolysis activity"/>
    <property type="evidence" value="ECO:0007669"/>
    <property type="project" value="InterPro"/>
</dbReference>
<dbReference type="GO" id="GO:0000400">
    <property type="term" value="F:four-way junction DNA binding"/>
    <property type="evidence" value="ECO:0007669"/>
    <property type="project" value="UniProtKB-UniRule"/>
</dbReference>
<dbReference type="GO" id="GO:0009378">
    <property type="term" value="F:four-way junction helicase activity"/>
    <property type="evidence" value="ECO:0007669"/>
    <property type="project" value="InterPro"/>
</dbReference>
<dbReference type="GO" id="GO:0006310">
    <property type="term" value="P:DNA recombination"/>
    <property type="evidence" value="ECO:0007669"/>
    <property type="project" value="UniProtKB-UniRule"/>
</dbReference>
<dbReference type="GO" id="GO:0006281">
    <property type="term" value="P:DNA repair"/>
    <property type="evidence" value="ECO:0007669"/>
    <property type="project" value="UniProtKB-UniRule"/>
</dbReference>
<dbReference type="GO" id="GO:0009432">
    <property type="term" value="P:SOS response"/>
    <property type="evidence" value="ECO:0007669"/>
    <property type="project" value="UniProtKB-UniRule"/>
</dbReference>
<dbReference type="CDD" id="cd00009">
    <property type="entry name" value="AAA"/>
    <property type="match status" value="1"/>
</dbReference>
<dbReference type="FunFam" id="1.10.10.10:FF:000086">
    <property type="entry name" value="Holliday junction ATP-dependent DNA helicase RuvB"/>
    <property type="match status" value="1"/>
</dbReference>
<dbReference type="FunFam" id="1.10.8.60:FF:000023">
    <property type="entry name" value="Holliday junction ATP-dependent DNA helicase RuvB"/>
    <property type="match status" value="1"/>
</dbReference>
<dbReference type="FunFam" id="3.40.50.300:FF:000073">
    <property type="entry name" value="Holliday junction ATP-dependent DNA helicase RuvB"/>
    <property type="match status" value="1"/>
</dbReference>
<dbReference type="Gene3D" id="1.10.8.60">
    <property type="match status" value="1"/>
</dbReference>
<dbReference type="Gene3D" id="3.40.50.300">
    <property type="entry name" value="P-loop containing nucleotide triphosphate hydrolases"/>
    <property type="match status" value="1"/>
</dbReference>
<dbReference type="Gene3D" id="1.10.10.10">
    <property type="entry name" value="Winged helix-like DNA-binding domain superfamily/Winged helix DNA-binding domain"/>
    <property type="match status" value="1"/>
</dbReference>
<dbReference type="HAMAP" id="MF_00016">
    <property type="entry name" value="DNA_HJ_migration_RuvB"/>
    <property type="match status" value="1"/>
</dbReference>
<dbReference type="InterPro" id="IPR003593">
    <property type="entry name" value="AAA+_ATPase"/>
</dbReference>
<dbReference type="InterPro" id="IPR041445">
    <property type="entry name" value="AAA_lid_4"/>
</dbReference>
<dbReference type="InterPro" id="IPR004605">
    <property type="entry name" value="DNA_helicase_Holl-junc_RuvB"/>
</dbReference>
<dbReference type="InterPro" id="IPR027417">
    <property type="entry name" value="P-loop_NTPase"/>
</dbReference>
<dbReference type="InterPro" id="IPR008824">
    <property type="entry name" value="RuvB-like_N"/>
</dbReference>
<dbReference type="InterPro" id="IPR008823">
    <property type="entry name" value="RuvB_C"/>
</dbReference>
<dbReference type="InterPro" id="IPR036388">
    <property type="entry name" value="WH-like_DNA-bd_sf"/>
</dbReference>
<dbReference type="InterPro" id="IPR036390">
    <property type="entry name" value="WH_DNA-bd_sf"/>
</dbReference>
<dbReference type="NCBIfam" id="NF000868">
    <property type="entry name" value="PRK00080.1"/>
    <property type="match status" value="1"/>
</dbReference>
<dbReference type="NCBIfam" id="TIGR00635">
    <property type="entry name" value="ruvB"/>
    <property type="match status" value="1"/>
</dbReference>
<dbReference type="PANTHER" id="PTHR42848">
    <property type="match status" value="1"/>
</dbReference>
<dbReference type="PANTHER" id="PTHR42848:SF1">
    <property type="entry name" value="HOLLIDAY JUNCTION BRANCH MIGRATION COMPLEX SUBUNIT RUVB"/>
    <property type="match status" value="1"/>
</dbReference>
<dbReference type="Pfam" id="PF17864">
    <property type="entry name" value="AAA_lid_4"/>
    <property type="match status" value="1"/>
</dbReference>
<dbReference type="Pfam" id="PF05491">
    <property type="entry name" value="RuvB_C"/>
    <property type="match status" value="1"/>
</dbReference>
<dbReference type="Pfam" id="PF05496">
    <property type="entry name" value="RuvB_N"/>
    <property type="match status" value="1"/>
</dbReference>
<dbReference type="SMART" id="SM00382">
    <property type="entry name" value="AAA"/>
    <property type="match status" value="1"/>
</dbReference>
<dbReference type="SUPFAM" id="SSF52540">
    <property type="entry name" value="P-loop containing nucleoside triphosphate hydrolases"/>
    <property type="match status" value="1"/>
</dbReference>
<dbReference type="SUPFAM" id="SSF46785">
    <property type="entry name" value="Winged helix' DNA-binding domain"/>
    <property type="match status" value="1"/>
</dbReference>
<feature type="chain" id="PRO_1000057141" description="Holliday junction branch migration complex subunit RuvB">
    <location>
        <begin position="1"/>
        <end position="336"/>
    </location>
</feature>
<feature type="region of interest" description="Large ATPase domain (RuvB-L)" evidence="1">
    <location>
        <begin position="4"/>
        <end position="184"/>
    </location>
</feature>
<feature type="region of interest" description="Small ATPAse domain (RuvB-S)" evidence="1">
    <location>
        <begin position="185"/>
        <end position="255"/>
    </location>
</feature>
<feature type="region of interest" description="Head domain (RuvB-H)" evidence="1">
    <location>
        <begin position="258"/>
        <end position="336"/>
    </location>
</feature>
<feature type="binding site" evidence="1">
    <location>
        <position position="23"/>
    </location>
    <ligand>
        <name>ATP</name>
        <dbReference type="ChEBI" id="CHEBI:30616"/>
    </ligand>
</feature>
<feature type="binding site" evidence="1">
    <location>
        <position position="24"/>
    </location>
    <ligand>
        <name>ATP</name>
        <dbReference type="ChEBI" id="CHEBI:30616"/>
    </ligand>
</feature>
<feature type="binding site" evidence="1">
    <location>
        <position position="65"/>
    </location>
    <ligand>
        <name>ATP</name>
        <dbReference type="ChEBI" id="CHEBI:30616"/>
    </ligand>
</feature>
<feature type="binding site" evidence="1">
    <location>
        <position position="68"/>
    </location>
    <ligand>
        <name>ATP</name>
        <dbReference type="ChEBI" id="CHEBI:30616"/>
    </ligand>
</feature>
<feature type="binding site" evidence="1">
    <location>
        <position position="69"/>
    </location>
    <ligand>
        <name>ATP</name>
        <dbReference type="ChEBI" id="CHEBI:30616"/>
    </ligand>
</feature>
<feature type="binding site" evidence="1">
    <location>
        <position position="69"/>
    </location>
    <ligand>
        <name>Mg(2+)</name>
        <dbReference type="ChEBI" id="CHEBI:18420"/>
    </ligand>
</feature>
<feature type="binding site" evidence="1">
    <location>
        <position position="70"/>
    </location>
    <ligand>
        <name>ATP</name>
        <dbReference type="ChEBI" id="CHEBI:30616"/>
    </ligand>
</feature>
<feature type="binding site" evidence="1">
    <location>
        <begin position="131"/>
        <end position="133"/>
    </location>
    <ligand>
        <name>ATP</name>
        <dbReference type="ChEBI" id="CHEBI:30616"/>
    </ligand>
</feature>
<feature type="binding site" evidence="1">
    <location>
        <position position="174"/>
    </location>
    <ligand>
        <name>ATP</name>
        <dbReference type="ChEBI" id="CHEBI:30616"/>
    </ligand>
</feature>
<feature type="binding site" evidence="1">
    <location>
        <position position="184"/>
    </location>
    <ligand>
        <name>ATP</name>
        <dbReference type="ChEBI" id="CHEBI:30616"/>
    </ligand>
</feature>
<feature type="binding site" evidence="1">
    <location>
        <position position="221"/>
    </location>
    <ligand>
        <name>ATP</name>
        <dbReference type="ChEBI" id="CHEBI:30616"/>
    </ligand>
</feature>
<feature type="binding site" evidence="1">
    <location>
        <position position="294"/>
    </location>
    <ligand>
        <name>DNA</name>
        <dbReference type="ChEBI" id="CHEBI:16991"/>
    </ligand>
</feature>
<feature type="binding site" evidence="1">
    <location>
        <position position="313"/>
    </location>
    <ligand>
        <name>DNA</name>
        <dbReference type="ChEBI" id="CHEBI:16991"/>
    </ligand>
</feature>
<feature type="binding site" evidence="1">
    <location>
        <position position="318"/>
    </location>
    <ligand>
        <name>DNA</name>
        <dbReference type="ChEBI" id="CHEBI:16991"/>
    </ligand>
</feature>
<name>RUVB_ECO24</name>
<organism>
    <name type="scientific">Escherichia coli O139:H28 (strain E24377A / ETEC)</name>
    <dbReference type="NCBI Taxonomy" id="331111"/>
    <lineage>
        <taxon>Bacteria</taxon>
        <taxon>Pseudomonadati</taxon>
        <taxon>Pseudomonadota</taxon>
        <taxon>Gammaproteobacteria</taxon>
        <taxon>Enterobacterales</taxon>
        <taxon>Enterobacteriaceae</taxon>
        <taxon>Escherichia</taxon>
    </lineage>
</organism>
<proteinExistence type="inferred from homology"/>
<keyword id="KW-0067">ATP-binding</keyword>
<keyword id="KW-0963">Cytoplasm</keyword>
<keyword id="KW-0227">DNA damage</keyword>
<keyword id="KW-0233">DNA recombination</keyword>
<keyword id="KW-0234">DNA repair</keyword>
<keyword id="KW-0238">DNA-binding</keyword>
<keyword id="KW-0378">Hydrolase</keyword>
<keyword id="KW-0547">Nucleotide-binding</keyword>
<keyword id="KW-1185">Reference proteome</keyword>
<keyword id="KW-0742">SOS response</keyword>
<gene>
    <name evidence="1" type="primary">ruvB</name>
    <name type="ordered locus">EcE24377A_2090</name>
</gene>
<accession>A7ZMY4</accession>
<protein>
    <recommendedName>
        <fullName evidence="1">Holliday junction branch migration complex subunit RuvB</fullName>
        <ecNumber evidence="1">3.6.4.-</ecNumber>
    </recommendedName>
</protein>